<name>RBS5_SOLTU</name>
<organism>
    <name type="scientific">Solanum tuberosum</name>
    <name type="common">Potato</name>
    <dbReference type="NCBI Taxonomy" id="4113"/>
    <lineage>
        <taxon>Eukaryota</taxon>
        <taxon>Viridiplantae</taxon>
        <taxon>Streptophyta</taxon>
        <taxon>Embryophyta</taxon>
        <taxon>Tracheophyta</taxon>
        <taxon>Spermatophyta</taxon>
        <taxon>Magnoliopsida</taxon>
        <taxon>eudicotyledons</taxon>
        <taxon>Gunneridae</taxon>
        <taxon>Pentapetalae</taxon>
        <taxon>asterids</taxon>
        <taxon>lamiids</taxon>
        <taxon>Solanales</taxon>
        <taxon>Solanaceae</taxon>
        <taxon>Solanoideae</taxon>
        <taxon>Solaneae</taxon>
        <taxon>Solanum</taxon>
    </lineage>
</organism>
<protein>
    <recommendedName>
        <fullName evidence="1">Ribulose bisphosphate carboxylase small subunit, chloroplastic 5</fullName>
        <shortName evidence="1">RuBisCO small subunit 5</shortName>
    </recommendedName>
    <alternativeName>
        <fullName>Ribulose bisphosphate carboxylase small chain 2C, chloroplastic</fullName>
        <shortName>RuBisCO small subunit 2C</shortName>
    </alternativeName>
</protein>
<sequence>MASSVMSSAAVATRGNGAQASMVAPFTGLKSTASFPVSRKQNLDITSIASNGGRVRCMQVWPPINMKKYETLSYLPDLSDEQLLKEVEYLLKNGWVPCLEFETEHGFVYRENNKSPGYYDGRYWTMWKLPMFGCTDATQVLAEVEEAKKAYPQAWIRIIGFDNVRQVQCISFIAYKPEGY</sequence>
<accession>P26577</accession>
<gene>
    <name evidence="1" type="primary">RBCS5</name>
    <name type="synonym">RBCS-2C</name>
</gene>
<proteinExistence type="inferred from homology"/>
<reference key="1">
    <citation type="journal article" date="1988" name="Proc. Natl. Acad. Sci. U.S.A.">
        <title>rbcS genes in Solanum tuberosum: conservation of transit peptide and exon shuffling during evolution.</title>
        <authorList>
            <person name="Wolter F.P."/>
            <person name="Fritz C.C."/>
            <person name="Willmitzer L."/>
            <person name="Schell J."/>
            <person name="Schreier P.H."/>
        </authorList>
    </citation>
    <scope>NUCLEOTIDE SEQUENCE [GENOMIC DNA]</scope>
</reference>
<reference key="2">
    <citation type="submission" date="1992-12" db="EMBL/GenBank/DDBJ databases">
        <authorList>
            <person name="Fritz C.C."/>
            <person name="Wolter F.P."/>
            <person name="Schenkemeyer V."/>
            <person name="Herget T."/>
            <person name="Schreier P.H."/>
        </authorList>
    </citation>
    <scope>NUCLEOTIDE SEQUENCE [GENOMIC DNA]</scope>
    <source>
        <strain>cv. AM 80.5793</strain>
    </source>
</reference>
<reference key="3">
    <citation type="journal article" date="2011" name="Nature">
        <title>Genome sequence and analysis of the tuber crop potato.</title>
        <authorList>
            <consortium name="The Potato Genome Sequencing Consortium"/>
        </authorList>
    </citation>
    <scope>NUCLEOTIDE SEQUENCE [LARGE SCALE GENOMIC DNA]</scope>
    <source>
        <strain>cv. DM1-3 516 R44</strain>
    </source>
</reference>
<keyword id="KW-0113">Calvin cycle</keyword>
<keyword id="KW-0120">Carbon dioxide fixation</keyword>
<keyword id="KW-0150">Chloroplast</keyword>
<keyword id="KW-0601">Photorespiration</keyword>
<keyword id="KW-0602">Photosynthesis</keyword>
<keyword id="KW-0934">Plastid</keyword>
<keyword id="KW-1185">Reference proteome</keyword>
<keyword id="KW-0809">Transit peptide</keyword>
<dbReference type="EMBL" id="X69762">
    <property type="protein sequence ID" value="CAA49416.1"/>
    <property type="molecule type" value="Genomic_DNA"/>
</dbReference>
<dbReference type="PIR" id="E31083">
    <property type="entry name" value="RKPO2C"/>
</dbReference>
<dbReference type="RefSeq" id="XP_006363111.1">
    <property type="nucleotide sequence ID" value="XM_006363049.2"/>
</dbReference>
<dbReference type="RefSeq" id="XP_006363112.1">
    <property type="nucleotide sequence ID" value="XM_006363050.2"/>
</dbReference>
<dbReference type="SMR" id="P26577"/>
<dbReference type="FunCoup" id="P26577">
    <property type="interactions" value="1469"/>
</dbReference>
<dbReference type="STRING" id="4113.P26577"/>
<dbReference type="PaxDb" id="4113-PGSC0003DMT400032975"/>
<dbReference type="EnsemblPlants" id="PGSC0003DMT400032975">
    <property type="protein sequence ID" value="PGSC0003DMT400032975"/>
    <property type="gene ID" value="PGSC0003DMG400012666"/>
</dbReference>
<dbReference type="EnsemblPlants" id="PGSC0003DMT400032976">
    <property type="protein sequence ID" value="PGSC0003DMT400032976"/>
    <property type="gene ID" value="PGSC0003DMG400012666"/>
</dbReference>
<dbReference type="EnsemblPlants" id="PGSC0003DMT400032978">
    <property type="protein sequence ID" value="PGSC0003DMT400032978"/>
    <property type="gene ID" value="PGSC0003DMG400012666"/>
</dbReference>
<dbReference type="EnsemblPlants" id="RHC02H1G2442.2.1">
    <property type="protein sequence ID" value="RHC02H1G2442.2.1"/>
    <property type="gene ID" value="RHC02H1G2442.2"/>
</dbReference>
<dbReference type="Gramene" id="PGSC0003DMT400032975">
    <property type="protein sequence ID" value="PGSC0003DMT400032975"/>
    <property type="gene ID" value="PGSC0003DMG400012666"/>
</dbReference>
<dbReference type="Gramene" id="PGSC0003DMT400032976">
    <property type="protein sequence ID" value="PGSC0003DMT400032976"/>
    <property type="gene ID" value="PGSC0003DMG400012666"/>
</dbReference>
<dbReference type="Gramene" id="PGSC0003DMT400032978">
    <property type="protein sequence ID" value="PGSC0003DMT400032978"/>
    <property type="gene ID" value="PGSC0003DMG400012666"/>
</dbReference>
<dbReference type="Gramene" id="RHC02H1G2442.2.1">
    <property type="protein sequence ID" value="RHC02H1G2442.2.1"/>
    <property type="gene ID" value="RHC02H1G2442.2"/>
</dbReference>
<dbReference type="KEGG" id="sot:102600888"/>
<dbReference type="KEGG" id="sot:102601229"/>
<dbReference type="eggNOG" id="ENOG502QT0M">
    <property type="taxonomic scope" value="Eukaryota"/>
</dbReference>
<dbReference type="InParanoid" id="P26577"/>
<dbReference type="OMA" id="RKNWVPC"/>
<dbReference type="OrthoDB" id="2013936at2759"/>
<dbReference type="Proteomes" id="UP000011115">
    <property type="component" value="Unassembled WGS sequence"/>
</dbReference>
<dbReference type="ExpressionAtlas" id="P26577">
    <property type="expression patterns" value="baseline and differential"/>
</dbReference>
<dbReference type="GO" id="GO:0009507">
    <property type="term" value="C:chloroplast"/>
    <property type="evidence" value="ECO:0007669"/>
    <property type="project" value="UniProtKB-SubCell"/>
</dbReference>
<dbReference type="GO" id="GO:0016984">
    <property type="term" value="F:ribulose-bisphosphate carboxylase activity"/>
    <property type="evidence" value="ECO:0007669"/>
    <property type="project" value="UniProtKB-UniRule"/>
</dbReference>
<dbReference type="GO" id="GO:0009853">
    <property type="term" value="P:photorespiration"/>
    <property type="evidence" value="ECO:0007669"/>
    <property type="project" value="UniProtKB-KW"/>
</dbReference>
<dbReference type="GO" id="GO:0019253">
    <property type="term" value="P:reductive pentose-phosphate cycle"/>
    <property type="evidence" value="ECO:0007669"/>
    <property type="project" value="UniProtKB-UniRule"/>
</dbReference>
<dbReference type="CDD" id="cd03527">
    <property type="entry name" value="RuBisCO_small"/>
    <property type="match status" value="1"/>
</dbReference>
<dbReference type="FunFam" id="3.30.190.10:FF:000001">
    <property type="entry name" value="Ribulose bisphosphate carboxylase small chain, chloroplastic"/>
    <property type="match status" value="1"/>
</dbReference>
<dbReference type="Gene3D" id="3.30.190.10">
    <property type="entry name" value="Ribulose bisphosphate carboxylase, small subunit"/>
    <property type="match status" value="1"/>
</dbReference>
<dbReference type="HAMAP" id="MF_00859">
    <property type="entry name" value="RuBisCO_S_bact"/>
    <property type="match status" value="1"/>
</dbReference>
<dbReference type="InterPro" id="IPR024681">
    <property type="entry name" value="RuBisCO_ssu"/>
</dbReference>
<dbReference type="InterPro" id="IPR000894">
    <property type="entry name" value="RuBisCO_ssu_dom"/>
</dbReference>
<dbReference type="InterPro" id="IPR024680">
    <property type="entry name" value="RuBisCO_ssu_N"/>
</dbReference>
<dbReference type="InterPro" id="IPR036385">
    <property type="entry name" value="RuBisCO_ssu_sf"/>
</dbReference>
<dbReference type="PANTHER" id="PTHR31262">
    <property type="entry name" value="RIBULOSE BISPHOSPHATE CARBOXYLASE SMALL CHAIN 1, CHLOROPLASTIC"/>
    <property type="match status" value="1"/>
</dbReference>
<dbReference type="PANTHER" id="PTHR31262:SF10">
    <property type="entry name" value="RIBULOSE BISPHOSPHATE CARBOXYLASE SMALL SUBUNIT 1A, CHLOROPLASTIC-RELATED"/>
    <property type="match status" value="1"/>
</dbReference>
<dbReference type="Pfam" id="PF12338">
    <property type="entry name" value="RbcS"/>
    <property type="match status" value="1"/>
</dbReference>
<dbReference type="Pfam" id="PF00101">
    <property type="entry name" value="RuBisCO_small"/>
    <property type="match status" value="1"/>
</dbReference>
<dbReference type="PRINTS" id="PR00152">
    <property type="entry name" value="RUBISCOSMALL"/>
</dbReference>
<dbReference type="SMART" id="SM00961">
    <property type="entry name" value="RuBisCO_small"/>
    <property type="match status" value="1"/>
</dbReference>
<dbReference type="SUPFAM" id="SSF55239">
    <property type="entry name" value="RuBisCO, small subunit"/>
    <property type="match status" value="1"/>
</dbReference>
<feature type="transit peptide" description="Chloroplast" evidence="1">
    <location>
        <begin position="1"/>
        <end position="56"/>
    </location>
</feature>
<feature type="chain" id="PRO_0000031554" description="Ribulose bisphosphate carboxylase small subunit, chloroplastic 5" evidence="1">
    <location>
        <begin position="57"/>
        <end position="180"/>
    </location>
</feature>
<evidence type="ECO:0000255" key="1">
    <source>
        <dbReference type="HAMAP-Rule" id="MF_00860"/>
    </source>
</evidence>
<comment type="function">
    <text evidence="1">RuBisCO catalyzes two reactions: the carboxylation of D-ribulose 1,5-bisphosphate, the primary event in carbon dioxide fixation, as well as the oxidative fragmentation of the pentose substrate. Both reactions occur simultaneously and in competition at the same active site. Although the small subunit is not catalytic it is essential for maximal activity.</text>
</comment>
<comment type="subunit">
    <text evidence="1">Heterohexadecamer of 8 large and 8 small subunits.</text>
</comment>
<comment type="subcellular location">
    <subcellularLocation>
        <location evidence="1">Plastid</location>
        <location evidence="1">Chloroplast</location>
    </subcellularLocation>
</comment>
<comment type="miscellaneous">
    <text evidence="1">The basic functional RuBisCO is composed of a large chain homodimer in a 'head-to-tail' conformation. In form I RuBisCO this homodimer is arranged in a barrel-like tetramer with the small subunits forming a tetrameric 'cap' on each end of the 'barrel'.</text>
</comment>
<comment type="similarity">
    <text evidence="1">Belongs to the RuBisCO small chain family.</text>
</comment>